<gene>
    <name evidence="1" type="primary">atpB</name>
    <name type="ordered locus">CLK_2010</name>
</gene>
<dbReference type="EMBL" id="CP000962">
    <property type="protein sequence ID" value="ACA54406.1"/>
    <property type="molecule type" value="Genomic_DNA"/>
</dbReference>
<dbReference type="RefSeq" id="WP_003401359.1">
    <property type="nucleotide sequence ID" value="NC_010520.1"/>
</dbReference>
<dbReference type="SMR" id="B1KXT5"/>
<dbReference type="KEGG" id="cbl:CLK_2010"/>
<dbReference type="HOGENOM" id="CLU_022916_0_0_9"/>
<dbReference type="GO" id="GO:0005524">
    <property type="term" value="F:ATP binding"/>
    <property type="evidence" value="ECO:0007669"/>
    <property type="project" value="UniProtKB-UniRule"/>
</dbReference>
<dbReference type="GO" id="GO:0046933">
    <property type="term" value="F:proton-transporting ATP synthase activity, rotational mechanism"/>
    <property type="evidence" value="ECO:0007669"/>
    <property type="project" value="UniProtKB-UniRule"/>
</dbReference>
<dbReference type="GO" id="GO:0042777">
    <property type="term" value="P:proton motive force-driven plasma membrane ATP synthesis"/>
    <property type="evidence" value="ECO:0007669"/>
    <property type="project" value="UniProtKB-UniRule"/>
</dbReference>
<dbReference type="CDD" id="cd18112">
    <property type="entry name" value="ATP-synt_V_A-type_beta_C"/>
    <property type="match status" value="1"/>
</dbReference>
<dbReference type="CDD" id="cd18118">
    <property type="entry name" value="ATP-synt_V_A-type_beta_N"/>
    <property type="match status" value="1"/>
</dbReference>
<dbReference type="CDD" id="cd01135">
    <property type="entry name" value="V_A-ATPase_B"/>
    <property type="match status" value="1"/>
</dbReference>
<dbReference type="Gene3D" id="3.40.50.12240">
    <property type="match status" value="1"/>
</dbReference>
<dbReference type="HAMAP" id="MF_00310">
    <property type="entry name" value="ATP_synth_B_arch"/>
    <property type="match status" value="1"/>
</dbReference>
<dbReference type="InterPro" id="IPR055190">
    <property type="entry name" value="ATP-synt_VA_C"/>
</dbReference>
<dbReference type="InterPro" id="IPR020003">
    <property type="entry name" value="ATPase_a/bsu_AS"/>
</dbReference>
<dbReference type="InterPro" id="IPR004100">
    <property type="entry name" value="ATPase_F1/V1/A1_a/bsu_N"/>
</dbReference>
<dbReference type="InterPro" id="IPR000194">
    <property type="entry name" value="ATPase_F1/V1/A1_a/bsu_nucl-bd"/>
</dbReference>
<dbReference type="InterPro" id="IPR027417">
    <property type="entry name" value="P-loop_NTPase"/>
</dbReference>
<dbReference type="InterPro" id="IPR022879">
    <property type="entry name" value="V-ATPase_su_B/beta"/>
</dbReference>
<dbReference type="NCBIfam" id="NF003235">
    <property type="entry name" value="PRK04196.1"/>
    <property type="match status" value="1"/>
</dbReference>
<dbReference type="PANTHER" id="PTHR43389">
    <property type="entry name" value="V-TYPE PROTON ATPASE SUBUNIT B"/>
    <property type="match status" value="1"/>
</dbReference>
<dbReference type="PANTHER" id="PTHR43389:SF4">
    <property type="entry name" value="V-TYPE PROTON ATPASE SUBUNIT B"/>
    <property type="match status" value="1"/>
</dbReference>
<dbReference type="Pfam" id="PF00006">
    <property type="entry name" value="ATP-synt_ab"/>
    <property type="match status" value="1"/>
</dbReference>
<dbReference type="Pfam" id="PF02874">
    <property type="entry name" value="ATP-synt_ab_N"/>
    <property type="match status" value="1"/>
</dbReference>
<dbReference type="Pfam" id="PF22919">
    <property type="entry name" value="ATP-synt_VA_C"/>
    <property type="match status" value="1"/>
</dbReference>
<dbReference type="PIRSF" id="PIRSF039114">
    <property type="entry name" value="V-ATPsynth_beta/V-ATPase_B"/>
    <property type="match status" value="1"/>
</dbReference>
<dbReference type="SUPFAM" id="SSF47917">
    <property type="entry name" value="C-terminal domain of alpha and beta subunits of F1 ATP synthase"/>
    <property type="match status" value="1"/>
</dbReference>
<dbReference type="SUPFAM" id="SSF52540">
    <property type="entry name" value="P-loop containing nucleoside triphosphate hydrolases"/>
    <property type="match status" value="1"/>
</dbReference>
<dbReference type="PROSITE" id="PS00152">
    <property type="entry name" value="ATPASE_ALPHA_BETA"/>
    <property type="match status" value="1"/>
</dbReference>
<organism>
    <name type="scientific">Clostridium botulinum (strain Loch Maree / Type A3)</name>
    <dbReference type="NCBI Taxonomy" id="498214"/>
    <lineage>
        <taxon>Bacteria</taxon>
        <taxon>Bacillati</taxon>
        <taxon>Bacillota</taxon>
        <taxon>Clostridia</taxon>
        <taxon>Eubacteriales</taxon>
        <taxon>Clostridiaceae</taxon>
        <taxon>Clostridium</taxon>
    </lineage>
</organism>
<reference key="1">
    <citation type="journal article" date="2007" name="PLoS ONE">
        <title>Analysis of the neurotoxin complex genes in Clostridium botulinum A1-A4 and B1 strains: BoNT/A3, /Ba4 and /B1 clusters are located within plasmids.</title>
        <authorList>
            <person name="Smith T.J."/>
            <person name="Hill K.K."/>
            <person name="Foley B.T."/>
            <person name="Detter J.C."/>
            <person name="Munk A.C."/>
            <person name="Bruce D.C."/>
            <person name="Doggett N.A."/>
            <person name="Smith L.A."/>
            <person name="Marks J.D."/>
            <person name="Xie G."/>
            <person name="Brettin T.S."/>
        </authorList>
    </citation>
    <scope>NUCLEOTIDE SEQUENCE [LARGE SCALE GENOMIC DNA]</scope>
    <source>
        <strain>Loch Maree / Type A3</strain>
    </source>
</reference>
<sequence>MLKEYRTVKEVVGPLMLVDQVDGVSFDELVEIELHNGEKRRGKVLEINKDKAMVQLFEGSAGINLKGAKVKFLGKPLELGVSEDMLGRVFDGLGNPKDGGPKIIPDKKLDINGIPINPVARNYPDEFIQTGVSAIDGLNTLVRGQKLPVFSGSGLPHAELAAQIARQAKVLNSDSKFAVVFAAIGTTFEEAQYFIDDFTKTGAIDRAVLFINLANDPAIERIATPRMALTAAEYLAFEKGMHVLVIMTDITNYCEALREVSAARKEVPGRRGYPGYLYTDLSTLYERAGRILGKEGSITQIPILTMPEDDKTHPIPDLTGYITEGQIILSRELYKKGIMPPIDVLPSLSRLKDKGIGKGKTREDHADTMNQLFSAYAQGKQAKELSVILGESALSDTDKLYAKFADAFEEEYVSQGFTTNRTIEETLNLGWKLLTILPKSELKRIRDEYLEKYLSKAEESK</sequence>
<feature type="chain" id="PRO_1000115657" description="V-type ATP synthase beta chain">
    <location>
        <begin position="1"/>
        <end position="461"/>
    </location>
</feature>
<evidence type="ECO:0000255" key="1">
    <source>
        <dbReference type="HAMAP-Rule" id="MF_00310"/>
    </source>
</evidence>
<accession>B1KXT5</accession>
<comment type="function">
    <text evidence="1">Produces ATP from ADP in the presence of a proton gradient across the membrane. The V-type beta chain is a regulatory subunit.</text>
</comment>
<comment type="similarity">
    <text evidence="1">Belongs to the ATPase alpha/beta chains family.</text>
</comment>
<name>VATB_CLOBM</name>
<proteinExistence type="inferred from homology"/>
<keyword id="KW-0066">ATP synthesis</keyword>
<keyword id="KW-0375">Hydrogen ion transport</keyword>
<keyword id="KW-0406">Ion transport</keyword>
<keyword id="KW-0813">Transport</keyword>
<protein>
    <recommendedName>
        <fullName evidence="1">V-type ATP synthase beta chain</fullName>
    </recommendedName>
    <alternativeName>
        <fullName evidence="1">V-ATPase subunit B</fullName>
    </alternativeName>
</protein>